<reference key="1">
    <citation type="journal article" date="2010" name="BMC Genomics">
        <title>Comparative venom gland transcriptome analysis of the scorpion Lychas mucronatus reveals intraspecific toxic gene diversity and new venomous components.</title>
        <authorList>
            <person name="Zhao R."/>
            <person name="Ma Y."/>
            <person name="He Y."/>
            <person name="Di Z."/>
            <person name="Wu Y.-L."/>
            <person name="Cao Z.-J."/>
            <person name="Li W.-X."/>
        </authorList>
    </citation>
    <scope>NUCLEOTIDE SEQUENCE [MRNA]</scope>
    <source>
        <strain>Yunnan</strain>
        <tissue>Venom gland</tissue>
    </source>
</reference>
<evidence type="ECO:0000250" key="1"/>
<evidence type="ECO:0000250" key="2">
    <source>
        <dbReference type="UniProtKB" id="P83108"/>
    </source>
</evidence>
<evidence type="ECO:0000305" key="3"/>
<evidence type="ECO:0000305" key="4">
    <source>
    </source>
</evidence>
<evidence type="ECO:0000312" key="5">
    <source>
        <dbReference type="EMBL" id="GT028904"/>
    </source>
</evidence>
<evidence type="ECO:0007744" key="6">
    <source>
        <dbReference type="PDB" id="6ATY"/>
    </source>
</evidence>
<evidence type="ECO:0007829" key="7">
    <source>
        <dbReference type="PDB" id="6ATY"/>
    </source>
</evidence>
<comment type="function">
    <text evidence="2">Neurotoxin. Decreases the action potential of myelinated nerves in mice and frogs.</text>
</comment>
<comment type="subcellular location">
    <subcellularLocation>
        <location evidence="4">Secreted</location>
    </subcellularLocation>
</comment>
<comment type="tissue specificity">
    <text evidence="4">Expressed by the venom gland.</text>
</comment>
<organism>
    <name type="scientific">Lychas mucronatus</name>
    <name type="common">Chinese swimming scorpion</name>
    <dbReference type="NCBI Taxonomy" id="172552"/>
    <lineage>
        <taxon>Eukaryota</taxon>
        <taxon>Metazoa</taxon>
        <taxon>Ecdysozoa</taxon>
        <taxon>Arthropoda</taxon>
        <taxon>Chelicerata</taxon>
        <taxon>Arachnida</taxon>
        <taxon>Scorpiones</taxon>
        <taxon>Buthida</taxon>
        <taxon>Buthoidea</taxon>
        <taxon>Buthidae</taxon>
        <taxon>Lychas</taxon>
    </lineage>
</organism>
<keyword id="KW-0002">3D-structure</keyword>
<keyword id="KW-1015">Disulfide bond</keyword>
<keyword id="KW-0528">Neurotoxin</keyword>
<keyword id="KW-0964">Secreted</keyword>
<keyword id="KW-0732">Signal</keyword>
<keyword id="KW-0800">Toxin</keyword>
<protein>
    <recommendedName>
        <fullName evidence="5">Venom protein 51.1</fullName>
    </recommendedName>
</protein>
<sequence>MKFFGILLIVTMVVLVMIATTYVESISIGIKCSPSIDLCEGQCRIRKYFTGYCSGDTCHCSG</sequence>
<feature type="signal peptide" evidence="1">
    <location>
        <begin position="1"/>
        <end position="25"/>
    </location>
</feature>
<feature type="chain" id="PRO_0000403909" description="Venom protein 51.1">
    <location>
        <begin position="26"/>
        <end position="62"/>
    </location>
</feature>
<feature type="disulfide bond" evidence="6">
    <location>
        <begin position="32"/>
        <end position="53"/>
    </location>
</feature>
<feature type="disulfide bond" evidence="6">
    <location>
        <begin position="39"/>
        <end position="58"/>
    </location>
</feature>
<feature type="disulfide bond" evidence="6">
    <location>
        <begin position="43"/>
        <end position="60"/>
    </location>
</feature>
<feature type="sequence conflict" description="In Ref. 1; GT028905." evidence="3" ref="1">
    <original>MV</original>
    <variation>IF</variation>
    <location>
        <begin position="12"/>
        <end position="13"/>
    </location>
</feature>
<feature type="strand" evidence="7">
    <location>
        <begin position="26"/>
        <end position="31"/>
    </location>
</feature>
<feature type="helix" evidence="7">
    <location>
        <begin position="34"/>
        <end position="36"/>
    </location>
</feature>
<feature type="helix" evidence="7">
    <location>
        <begin position="39"/>
        <end position="45"/>
    </location>
</feature>
<feature type="strand" evidence="7">
    <location>
        <begin position="49"/>
        <end position="54"/>
    </location>
</feature>
<feature type="strand" evidence="7">
    <location>
        <begin position="57"/>
        <end position="61"/>
    </location>
</feature>
<proteinExistence type="evidence at protein level"/>
<dbReference type="EMBL" id="GT028904">
    <property type="status" value="NOT_ANNOTATED_CDS"/>
    <property type="molecule type" value="mRNA"/>
</dbReference>
<dbReference type="EMBL" id="GT028905">
    <property type="status" value="NOT_ANNOTATED_CDS"/>
    <property type="molecule type" value="mRNA"/>
</dbReference>
<dbReference type="PDB" id="6ATY">
    <property type="method" value="X-ray"/>
    <property type="resolution" value="1.80 A"/>
    <property type="chains" value="A=26-62"/>
</dbReference>
<dbReference type="PDBsum" id="6ATY"/>
<dbReference type="SMR" id="P0CJ17"/>
<dbReference type="GO" id="GO:0005576">
    <property type="term" value="C:extracellular region"/>
    <property type="evidence" value="ECO:0007669"/>
    <property type="project" value="UniProtKB-SubCell"/>
</dbReference>
<dbReference type="GO" id="GO:0090729">
    <property type="term" value="F:toxin activity"/>
    <property type="evidence" value="ECO:0007669"/>
    <property type="project" value="UniProtKB-KW"/>
</dbReference>
<name>VP51_LYCMC</name>
<accession>P0CJ17</accession>